<organism>
    <name type="scientific">Caenorhabditis elegans</name>
    <dbReference type="NCBI Taxonomy" id="6239"/>
    <lineage>
        <taxon>Eukaryota</taxon>
        <taxon>Metazoa</taxon>
        <taxon>Ecdysozoa</taxon>
        <taxon>Nematoda</taxon>
        <taxon>Chromadorea</taxon>
        <taxon>Rhabditida</taxon>
        <taxon>Rhabditina</taxon>
        <taxon>Rhabditomorpha</taxon>
        <taxon>Rhabditoidea</taxon>
        <taxon>Rhabditidae</taxon>
        <taxon>Peloderinae</taxon>
        <taxon>Caenorhabditis</taxon>
    </lineage>
</organism>
<feature type="chain" id="PRO_0000240187" description="Acidic leucine-rich nuclear phosphoprotein 32-related protein 1">
    <location>
        <begin position="1"/>
        <end position="229"/>
    </location>
</feature>
<feature type="repeat" description="LRR 1">
    <location>
        <begin position="19"/>
        <end position="40"/>
    </location>
</feature>
<feature type="repeat" description="LRR 2">
    <location>
        <begin position="42"/>
        <end position="63"/>
    </location>
</feature>
<feature type="repeat" description="LRR 3">
    <location>
        <begin position="64"/>
        <end position="85"/>
    </location>
</feature>
<feature type="repeat" description="LRR 4">
    <location>
        <begin position="90"/>
        <end position="110"/>
    </location>
</feature>
<feature type="domain" description="LRRCT">
    <location>
        <begin position="124"/>
        <end position="164"/>
    </location>
</feature>
<feature type="region of interest" description="Disordered" evidence="1">
    <location>
        <begin position="155"/>
        <end position="229"/>
    </location>
</feature>
<feature type="compositionally biased region" description="Acidic residues" evidence="1">
    <location>
        <begin position="155"/>
        <end position="177"/>
    </location>
</feature>
<feature type="compositionally biased region" description="Basic and acidic residues" evidence="1">
    <location>
        <begin position="219"/>
        <end position="229"/>
    </location>
</feature>
<reference key="1">
    <citation type="journal article" date="1998" name="Science">
        <title>Genome sequence of the nematode C. elegans: a platform for investigating biology.</title>
        <authorList>
            <consortium name="The C. elegans sequencing consortium"/>
        </authorList>
    </citation>
    <scope>NUCLEOTIDE SEQUENCE [LARGE SCALE GENOMIC DNA]</scope>
    <source>
        <strain>Bristol N2</strain>
    </source>
</reference>
<protein>
    <recommendedName>
        <fullName>Acidic leucine-rich nuclear phosphoprotein 32-related protein 1</fullName>
    </recommendedName>
    <alternativeName>
        <fullName>ANP32/acidic nuclear phosphoprotein-like protein 1</fullName>
    </alternativeName>
</protein>
<gene>
    <name type="ORF">F33H2.3</name>
</gene>
<proteinExistence type="inferred from homology"/>
<sequence length="229" mass="24851">MPSMAEIYVKELRERDPATVDTLFLDNAEDGQIGGLTDQLINLEMLSMVKCGLTTLAGFPTLPALTYLDISDNQLGDNASFDVLVKNAPDLKKITLASNKLSLDNLRCLKVLPNLFELDLSNNPSLGLLEDYREKMFEMIPSLKILDGCDVDGEEVEEEFAGEGGEDSEEGSGDEDGPGLSYLEKSQFSDDETDDYAPEGGDAEPRGTKRGASDNGEEPDNKKAAGDDE</sequence>
<comment type="similarity">
    <text evidence="2">Belongs to the ANP32 family.</text>
</comment>
<dbReference type="EMBL" id="Z81526">
    <property type="protein sequence ID" value="CAB04265.1"/>
    <property type="molecule type" value="Genomic_DNA"/>
</dbReference>
<dbReference type="PIR" id="T21714">
    <property type="entry name" value="T21714"/>
</dbReference>
<dbReference type="RefSeq" id="NP_001366886.1">
    <property type="nucleotide sequence ID" value="NM_001381278.3"/>
</dbReference>
<dbReference type="RefSeq" id="NP_493622.1">
    <property type="nucleotide sequence ID" value="NM_061221.4"/>
</dbReference>
<dbReference type="SMR" id="O62220"/>
<dbReference type="BioGRID" id="38753">
    <property type="interactions" value="6"/>
</dbReference>
<dbReference type="DIP" id="DIP-25265N"/>
<dbReference type="FunCoup" id="O62220">
    <property type="interactions" value="2682"/>
</dbReference>
<dbReference type="STRING" id="6239.F33H2.3.1"/>
<dbReference type="iPTMnet" id="O62220"/>
<dbReference type="PaxDb" id="6239-F33H2.3"/>
<dbReference type="PeptideAtlas" id="O62220"/>
<dbReference type="EnsemblMetazoa" id="F33H2.3.1">
    <property type="protein sequence ID" value="F33H2.3.1"/>
    <property type="gene ID" value="WBGene00009367"/>
</dbReference>
<dbReference type="GeneID" id="173372"/>
<dbReference type="UCSC" id="F33H2.3">
    <property type="organism name" value="c. elegans"/>
</dbReference>
<dbReference type="AGR" id="WB:WBGene00009367"/>
<dbReference type="WormBase" id="F33H2.3">
    <property type="protein sequence ID" value="CE17766"/>
    <property type="gene ID" value="WBGene00009367"/>
</dbReference>
<dbReference type="eggNOG" id="KOG2739">
    <property type="taxonomic scope" value="Eukaryota"/>
</dbReference>
<dbReference type="GeneTree" id="ENSGT00950000182907"/>
<dbReference type="HOGENOM" id="CLU_063314_3_1_1"/>
<dbReference type="InParanoid" id="O62220"/>
<dbReference type="OMA" id="LDNCRCV"/>
<dbReference type="OrthoDB" id="2160613at2759"/>
<dbReference type="PhylomeDB" id="O62220"/>
<dbReference type="PRO" id="PR:O62220"/>
<dbReference type="Proteomes" id="UP000001940">
    <property type="component" value="Chromosome I"/>
</dbReference>
<dbReference type="Bgee" id="WBGene00009367">
    <property type="expression patterns" value="Expressed in embryo and 4 other cell types or tissues"/>
</dbReference>
<dbReference type="GO" id="GO:0005634">
    <property type="term" value="C:nucleus"/>
    <property type="evidence" value="ECO:0000318"/>
    <property type="project" value="GO_Central"/>
</dbReference>
<dbReference type="GO" id="GO:0042393">
    <property type="term" value="F:histone binding"/>
    <property type="evidence" value="ECO:0000318"/>
    <property type="project" value="GO_Central"/>
</dbReference>
<dbReference type="FunFam" id="3.80.10.10:FF:000131">
    <property type="entry name" value="acidic leucine-rich nuclear phosphoprotein 32-related protein-like"/>
    <property type="match status" value="1"/>
</dbReference>
<dbReference type="Gene3D" id="3.80.10.10">
    <property type="entry name" value="Ribonuclease Inhibitor"/>
    <property type="match status" value="1"/>
</dbReference>
<dbReference type="InterPro" id="IPR045081">
    <property type="entry name" value="AN32"/>
</dbReference>
<dbReference type="InterPro" id="IPR032675">
    <property type="entry name" value="LRR_dom_sf"/>
</dbReference>
<dbReference type="InterPro" id="IPR003603">
    <property type="entry name" value="U2A'_phosphoprotein32A_C"/>
</dbReference>
<dbReference type="PANTHER" id="PTHR11375">
    <property type="entry name" value="ACIDIC LEUCINE-RICH NUCLEAR PHOSPHOPROTEIN 32"/>
    <property type="match status" value="1"/>
</dbReference>
<dbReference type="PANTHER" id="PTHR11375:SF0">
    <property type="entry name" value="ACIDIC LEUCINE-RICH NUCLEAR PHOSPHOPROTEIN 32 FAMILY MEMBER A"/>
    <property type="match status" value="1"/>
</dbReference>
<dbReference type="SMART" id="SM00446">
    <property type="entry name" value="LRRcap"/>
    <property type="match status" value="1"/>
</dbReference>
<dbReference type="SUPFAM" id="SSF52058">
    <property type="entry name" value="L domain-like"/>
    <property type="match status" value="1"/>
</dbReference>
<keyword id="KW-0433">Leucine-rich repeat</keyword>
<keyword id="KW-1185">Reference proteome</keyword>
<keyword id="KW-0677">Repeat</keyword>
<name>AN321_CAEEL</name>
<accession>O62220</accession>
<evidence type="ECO:0000256" key="1">
    <source>
        <dbReference type="SAM" id="MobiDB-lite"/>
    </source>
</evidence>
<evidence type="ECO:0000305" key="2"/>